<reference key="1">
    <citation type="journal article" date="1995" name="Abstr. - Soc. Neurosci.">
        <title>Development of an ovine Y3 cDNA and expression of the Y3 receptor mRNA in the ovine hypothalamus and pituitary.</title>
        <authorList>
            <person name="Dyer C.J."/>
            <person name="Matteri R.L."/>
            <person name="Keisler D.H."/>
        </authorList>
    </citation>
    <scope>NUCLEOTIDE SEQUENCE [MRNA]</scope>
    <source>
        <tissue>Hypothalamus</tissue>
    </source>
</reference>
<evidence type="ECO:0000250" key="1"/>
<evidence type="ECO:0000250" key="2">
    <source>
        <dbReference type="UniProtKB" id="P61073"/>
    </source>
</evidence>
<evidence type="ECO:0000250" key="3">
    <source>
        <dbReference type="UniProtKB" id="P70658"/>
    </source>
</evidence>
<evidence type="ECO:0000255" key="4">
    <source>
        <dbReference type="PROSITE-ProRule" id="PRU00521"/>
    </source>
</evidence>
<evidence type="ECO:0000305" key="5"/>
<feature type="chain" id="PRO_0000069359" description="C-X-C chemokine receptor type 4">
    <location>
        <begin position="1" status="less than"/>
        <end position="192" status="greater than"/>
    </location>
</feature>
<feature type="topological domain" description="Extracellular" evidence="5">
    <location>
        <begin position="1"/>
        <end position="28"/>
    </location>
</feature>
<feature type="transmembrane region" description="Helical; Name=1" evidence="2">
    <location>
        <begin position="29"/>
        <end position="53"/>
    </location>
</feature>
<feature type="topological domain" description="Cytoplasmic" evidence="5">
    <location>
        <begin position="54"/>
        <end position="67"/>
    </location>
</feature>
<feature type="transmembrane region" description="Helical; Name=2" evidence="2">
    <location>
        <begin position="68"/>
        <end position="89"/>
    </location>
</feature>
<feature type="topological domain" description="Extracellular" evidence="5">
    <location>
        <begin position="90"/>
        <end position="100"/>
    </location>
</feature>
<feature type="transmembrane region" description="Helical; Name=3" evidence="2">
    <location>
        <begin position="101"/>
        <end position="120"/>
    </location>
</feature>
<feature type="topological domain" description="Cytoplasmic" evidence="5">
    <location>
        <begin position="121"/>
        <end position="144"/>
    </location>
</feature>
<feature type="transmembrane region" description="Helical; Name=4" evidence="2">
    <location>
        <begin position="145"/>
        <end position="164"/>
    </location>
</feature>
<feature type="topological domain" description="Extracellular" evidence="5">
    <location>
        <begin position="165"/>
        <end position="185"/>
    </location>
</feature>
<feature type="transmembrane region" description="Helical; Name=5" evidence="2">
    <location>
        <begin position="186"/>
        <end position="192" status="greater than"/>
    </location>
</feature>
<feature type="region of interest" description="Important for chemokine binding and signaling" evidence="1">
    <location>
        <begin position="1"/>
        <end position="11"/>
    </location>
</feature>
<feature type="region of interest" description="Chemokine binding" evidence="1">
    <location>
        <begin position="84"/>
        <end position="87"/>
    </location>
</feature>
<feature type="region of interest" description="Chemokine binding" evidence="1">
    <location>
        <begin position="103"/>
        <end position="107"/>
    </location>
</feature>
<feature type="region of interest" description="Involved in dimerization; when bound to chemokine" evidence="1">
    <location>
        <begin position="125"/>
        <end position="137"/>
    </location>
</feature>
<feature type="region of interest" description="Chemokine binding, important for signaling" evidence="1">
    <location>
        <begin position="176"/>
        <end position="180"/>
    </location>
</feature>
<feature type="short sequence motif" description="Important for signaling" evidence="1">
    <location>
        <begin position="123"/>
        <end position="125"/>
    </location>
</feature>
<feature type="site" description="Chemokine binding" evidence="1">
    <location>
        <position position="161"/>
    </location>
</feature>
<feature type="modified residue" description="Sulfotyrosine" evidence="2">
    <location>
        <position position="1"/>
    </location>
</feature>
<feature type="modified residue" description="Sulfotyrosine" evidence="2">
    <location>
        <position position="11"/>
    </location>
</feature>
<feature type="glycosylation site" description="O-linked (Xyl...) (chondroitin sulfate) serine" evidence="2">
    <location>
        <position position="8"/>
    </location>
</feature>
<feature type="disulfide bond" evidence="4">
    <location>
        <begin position="99"/>
        <end position="176"/>
    </location>
</feature>
<feature type="non-terminal residue">
    <location>
        <position position="1"/>
    </location>
</feature>
<feature type="non-terminal residue">
    <location>
        <position position="192"/>
    </location>
</feature>
<organism>
    <name type="scientific">Ovis aries</name>
    <name type="common">Sheep</name>
    <dbReference type="NCBI Taxonomy" id="9940"/>
    <lineage>
        <taxon>Eukaryota</taxon>
        <taxon>Metazoa</taxon>
        <taxon>Chordata</taxon>
        <taxon>Craniata</taxon>
        <taxon>Vertebrata</taxon>
        <taxon>Euteleostomi</taxon>
        <taxon>Mammalia</taxon>
        <taxon>Eutheria</taxon>
        <taxon>Laurasiatheria</taxon>
        <taxon>Artiodactyla</taxon>
        <taxon>Ruminantia</taxon>
        <taxon>Pecora</taxon>
        <taxon>Bovidae</taxon>
        <taxon>Caprinae</taxon>
        <taxon>Ovis</taxon>
    </lineage>
</organism>
<sequence>YTEDDLGSGDYDSMKEPCFREENAHFNRIFLPTVYSIIFLTGIVGNGLVILVMGYQKKLRSMTDKYRLHLSVADLLFVLTLPFWAVDAVANWYFGQFLCKAVHVIYTVNLYSSVLILAFISLDRYLAIVHATNSQRPRKLLAEKVVYVGVWLPAVLLTIPDLIFADIKEADERYICDRFYPSDLWLVVFQFQ</sequence>
<dbReference type="EMBL" id="U38942">
    <property type="protein sequence ID" value="AAA81347.1"/>
    <property type="molecule type" value="mRNA"/>
</dbReference>
<dbReference type="SMR" id="Q28553"/>
<dbReference type="STRING" id="9940.ENSOARP00000011227"/>
<dbReference type="GlyCosmos" id="Q28553">
    <property type="glycosylation" value="1 site, No reported glycans"/>
</dbReference>
<dbReference type="PaxDb" id="9940-ENSOARP00000011227"/>
<dbReference type="eggNOG" id="KOG3656">
    <property type="taxonomic scope" value="Eukaryota"/>
</dbReference>
<dbReference type="Proteomes" id="UP000002356">
    <property type="component" value="Unplaced"/>
</dbReference>
<dbReference type="GO" id="GO:0070161">
    <property type="term" value="C:anchoring junction"/>
    <property type="evidence" value="ECO:0007669"/>
    <property type="project" value="UniProtKB-SubCell"/>
</dbReference>
<dbReference type="GO" id="GO:0005769">
    <property type="term" value="C:early endosome"/>
    <property type="evidence" value="ECO:0000250"/>
    <property type="project" value="UniProtKB"/>
</dbReference>
<dbReference type="GO" id="GO:0009897">
    <property type="term" value="C:external side of plasma membrane"/>
    <property type="evidence" value="ECO:0007669"/>
    <property type="project" value="TreeGrafter"/>
</dbReference>
<dbReference type="GO" id="GO:0005770">
    <property type="term" value="C:late endosome"/>
    <property type="evidence" value="ECO:0000250"/>
    <property type="project" value="UniProtKB"/>
</dbReference>
<dbReference type="GO" id="GO:0005764">
    <property type="term" value="C:lysosome"/>
    <property type="evidence" value="ECO:0000250"/>
    <property type="project" value="UniProtKB"/>
</dbReference>
<dbReference type="GO" id="GO:0005886">
    <property type="term" value="C:plasma membrane"/>
    <property type="evidence" value="ECO:0000250"/>
    <property type="project" value="UniProtKB"/>
</dbReference>
<dbReference type="GO" id="GO:0019957">
    <property type="term" value="F:C-C chemokine binding"/>
    <property type="evidence" value="ECO:0007669"/>
    <property type="project" value="TreeGrafter"/>
</dbReference>
<dbReference type="GO" id="GO:0016493">
    <property type="term" value="F:C-C chemokine receptor activity"/>
    <property type="evidence" value="ECO:0007669"/>
    <property type="project" value="TreeGrafter"/>
</dbReference>
<dbReference type="GO" id="GO:0038147">
    <property type="term" value="F:C-X-C motif chemokine 12 receptor activity"/>
    <property type="evidence" value="ECO:0000250"/>
    <property type="project" value="UniProtKB"/>
</dbReference>
<dbReference type="GO" id="GO:0007420">
    <property type="term" value="P:brain development"/>
    <property type="evidence" value="ECO:0007669"/>
    <property type="project" value="TreeGrafter"/>
</dbReference>
<dbReference type="GO" id="GO:0019722">
    <property type="term" value="P:calcium-mediated signaling"/>
    <property type="evidence" value="ECO:0007669"/>
    <property type="project" value="TreeGrafter"/>
</dbReference>
<dbReference type="GO" id="GO:0060326">
    <property type="term" value="P:cell chemotaxis"/>
    <property type="evidence" value="ECO:0007669"/>
    <property type="project" value="TreeGrafter"/>
</dbReference>
<dbReference type="GO" id="GO:0071345">
    <property type="term" value="P:cellular response to cytokine stimulus"/>
    <property type="evidence" value="ECO:0000250"/>
    <property type="project" value="UniProtKB"/>
</dbReference>
<dbReference type="GO" id="GO:0038160">
    <property type="term" value="P:CXCL12-activated CXCR4 signaling pathway"/>
    <property type="evidence" value="ECO:0000250"/>
    <property type="project" value="UniProtKB"/>
</dbReference>
<dbReference type="GO" id="GO:0006955">
    <property type="term" value="P:immune response"/>
    <property type="evidence" value="ECO:0007669"/>
    <property type="project" value="TreeGrafter"/>
</dbReference>
<dbReference type="GO" id="GO:0022008">
    <property type="term" value="P:neurogenesis"/>
    <property type="evidence" value="ECO:0007669"/>
    <property type="project" value="TreeGrafter"/>
</dbReference>
<dbReference type="GO" id="GO:0007204">
    <property type="term" value="P:positive regulation of cytosolic calcium ion concentration"/>
    <property type="evidence" value="ECO:0007669"/>
    <property type="project" value="TreeGrafter"/>
</dbReference>
<dbReference type="Gene3D" id="1.20.1070.10">
    <property type="entry name" value="Rhodopsin 7-helix transmembrane proteins"/>
    <property type="match status" value="1"/>
</dbReference>
<dbReference type="InterPro" id="IPR050119">
    <property type="entry name" value="CCR1-9-like"/>
</dbReference>
<dbReference type="InterPro" id="IPR022726">
    <property type="entry name" value="Chemokine_CXCR4_N_dom"/>
</dbReference>
<dbReference type="InterPro" id="IPR000355">
    <property type="entry name" value="Chemokine_rcpt"/>
</dbReference>
<dbReference type="InterPro" id="IPR001277">
    <property type="entry name" value="CXCR4/ACKR2"/>
</dbReference>
<dbReference type="InterPro" id="IPR000276">
    <property type="entry name" value="GPCR_Rhodpsn"/>
</dbReference>
<dbReference type="InterPro" id="IPR017452">
    <property type="entry name" value="GPCR_Rhodpsn_7TM"/>
</dbReference>
<dbReference type="PANTHER" id="PTHR10489:SF594">
    <property type="entry name" value="C-X-C CHEMOKINE RECEPTOR TYPE 4"/>
    <property type="match status" value="1"/>
</dbReference>
<dbReference type="PANTHER" id="PTHR10489">
    <property type="entry name" value="CELL ADHESION MOLECULE"/>
    <property type="match status" value="1"/>
</dbReference>
<dbReference type="Pfam" id="PF00001">
    <property type="entry name" value="7tm_1"/>
    <property type="match status" value="1"/>
</dbReference>
<dbReference type="Pfam" id="PF12109">
    <property type="entry name" value="CXCR4_N"/>
    <property type="match status" value="1"/>
</dbReference>
<dbReference type="PRINTS" id="PR00657">
    <property type="entry name" value="CCCHEMOKINER"/>
</dbReference>
<dbReference type="PRINTS" id="PR00645">
    <property type="entry name" value="CXCCHMKINER4"/>
</dbReference>
<dbReference type="PRINTS" id="PR00237">
    <property type="entry name" value="GPCRRHODOPSN"/>
</dbReference>
<dbReference type="SUPFAM" id="SSF81321">
    <property type="entry name" value="Family A G protein-coupled receptor-like"/>
    <property type="match status" value="1"/>
</dbReference>
<dbReference type="PROSITE" id="PS00237">
    <property type="entry name" value="G_PROTEIN_RECEP_F1_1"/>
    <property type="match status" value="1"/>
</dbReference>
<dbReference type="PROSITE" id="PS50262">
    <property type="entry name" value="G_PROTEIN_RECEP_F1_2"/>
    <property type="match status" value="1"/>
</dbReference>
<proteinExistence type="evidence at transcript level"/>
<accession>Q28553</accession>
<gene>
    <name type="primary">CXCR4</name>
    <name type="synonym">LESTR</name>
</gene>
<comment type="function">
    <text evidence="2 3">Receptor for the C-X-C chemokine CXCL12/SDF-1 that transduces a signal by increasing intracellular calcium ion levels and enhancing MAPK1/MAPK3 activation. Involved in the AKT signaling cascade (By similarity). Plays a role in regulation of cell migration, e.g. during wound healing. Acts as a receptor for extracellular ubiquitin; leading to enhanced intracellular calcium ions and reduced cellular cAMP levels. Binds bacterial lipopolysaccharide (LPS) et mediates LPS-induced inflammatory response, including TNF secretion by monocytes (By similarity). Involved in hematopoiesis and in cardiac ventricular septum formation. Also plays an essential role in vascularization of the gastrointestinal tract, probably by regulating vascular branching and/or remodeling processes in endothelial cells. Involved in cerebellar development. In the CNS, could mediate hippocampal-neuron survival (By similarity).</text>
</comment>
<comment type="subunit">
    <text evidence="2">Monomer. Can form homodimers. Interacts with CD164. Interacts with ARRB2; the interaction is dependent on the C-terminal phosphorylation of CXCR4 and allows activation of MAPK1 and MAPK3. Interacts with ARR3; the interaction is dependent on the C-terminal phosphorylation of CXCR4 and modulates calcium mobilization. Interacts with RNF113A; the interaction, enhanced by CXCL12, promotes CXCR4 ubiquitination and subsequent degradation. Interacts (via the cytoplasmic C-terminal) with ITCH (via the WW domains I and II); the interaction, enhanced by CXCL12, promotes CXCR4 ubiquitination and leads to its degradation. Interacts with extracellular ubiquitin. Interacts with DBN1; this interaction is enhanced by antigenic stimulation. Following LPS binding, may form a complex with GDF5, HSP90AA1 and HSPA8.</text>
</comment>
<comment type="subcellular location">
    <subcellularLocation>
        <location evidence="2">Cell membrane</location>
        <topology evidence="2">Multi-pass membrane protein</topology>
    </subcellularLocation>
    <subcellularLocation>
        <location evidence="1">Cell junction</location>
    </subcellularLocation>
    <subcellularLocation>
        <location evidence="1">Early endosome</location>
    </subcellularLocation>
    <subcellularLocation>
        <location evidence="1">Late endosome</location>
    </subcellularLocation>
    <subcellularLocation>
        <location evidence="1">Lysosome</location>
    </subcellularLocation>
    <text evidence="1">In unstimulated cells, diffuse pattern on plasma membrane. On agonist stimulation, colocalizes with ITCH at the plasma membrane where it becomes ubiquitinated (By similarity). In the presence of antigen, distributes to the immunological synapse forming at the T-cell-APC contact area, where it localizes at the peripheral and distal supramolecular activation cluster (SMAC) (By similarity).</text>
</comment>
<comment type="PTM">
    <text evidence="2">Phosphorylated on agonist stimulation. Rapidly phosphorylated on serine and threonine residues in the C-terminal.</text>
</comment>
<comment type="PTM">
    <text evidence="2">Ubiquitinated after ligand binding, leading to its degradation. Ubiquitinated by ITCH at the cell membrane on agonist stimulation. The ubiquitin-dependent mechanism, endosomal sorting complex required for transport (ESCRT), then targets CXCR4 for lysosomal degradation. This process is dependent also on prior Ser-/Thr-phosphorylation in the C-terminal of CXCR4. Also binding of ARRB1 to STAM negatively regulates CXCR4 sorting to lysosomes though modulating ubiquitination of SFR5S.</text>
</comment>
<comment type="PTM">
    <text evidence="2">Sulfation is required for efficient binding of CXCL12/SDF-1alpha and promotes its dimerization.</text>
</comment>
<comment type="PTM">
    <text evidence="2">O- and N-glycosylated. N-glycosylation can mask coreceptor function. The O-glycosylation chondroitin sulfate attachment does not affect interaction with CXCL12/SDF-1alpha nor its coreceptor activity.</text>
</comment>
<comment type="similarity">
    <text evidence="4">Belongs to the G-protein coupled receptor 1 family.</text>
</comment>
<comment type="caution">
    <text evidence="5">Was originally (Ref.1) thought to be a receptor for neuropeptide Y type 3 (NPY3R) (NPY3-R).</text>
</comment>
<name>CXCR4_SHEEP</name>
<protein>
    <recommendedName>
        <fullName>C-X-C chemokine receptor type 4</fullName>
        <shortName>CXC-R4</shortName>
        <shortName>CXCR-4</shortName>
    </recommendedName>
    <alternativeName>
        <fullName>Fusin</fullName>
    </alternativeName>
    <alternativeName>
        <fullName>Leukocyte-derived seven transmembrane domain receptor</fullName>
        <shortName>LESTR</shortName>
    </alternativeName>
    <alternativeName>
        <fullName>Stromal cell-derived factor 1 receptor</fullName>
        <shortName>SDF-1 receptor</shortName>
    </alternativeName>
    <cdAntigenName>CD184</cdAntigenName>
</protein>
<keyword id="KW-0965">Cell junction</keyword>
<keyword id="KW-1003">Cell membrane</keyword>
<keyword id="KW-1015">Disulfide bond</keyword>
<keyword id="KW-0967">Endosome</keyword>
<keyword id="KW-0297">G-protein coupled receptor</keyword>
<keyword id="KW-0325">Glycoprotein</keyword>
<keyword id="KW-0458">Lysosome</keyword>
<keyword id="KW-0472">Membrane</keyword>
<keyword id="KW-0654">Proteoglycan</keyword>
<keyword id="KW-0675">Receptor</keyword>
<keyword id="KW-1185">Reference proteome</keyword>
<keyword id="KW-0765">Sulfation</keyword>
<keyword id="KW-0807">Transducer</keyword>
<keyword id="KW-0812">Transmembrane</keyword>
<keyword id="KW-1133">Transmembrane helix</keyword>
<keyword id="KW-0832">Ubl conjugation</keyword>